<feature type="chain" id="PRO_0000307487" description="Triosephosphate isomerase">
    <location>
        <begin position="1"/>
        <end position="251"/>
    </location>
</feature>
<feature type="active site" description="Electrophile" evidence="1">
    <location>
        <position position="95"/>
    </location>
</feature>
<feature type="active site" description="Proton acceptor" evidence="1">
    <location>
        <position position="167"/>
    </location>
</feature>
<feature type="binding site" evidence="1">
    <location>
        <begin position="9"/>
        <end position="11"/>
    </location>
    <ligand>
        <name>substrate</name>
    </ligand>
</feature>
<feature type="binding site" evidence="1">
    <location>
        <position position="173"/>
    </location>
    <ligand>
        <name>substrate</name>
    </ligand>
</feature>
<feature type="binding site" evidence="1">
    <location>
        <position position="213"/>
    </location>
    <ligand>
        <name>substrate</name>
    </ligand>
</feature>
<feature type="binding site" evidence="1">
    <location>
        <begin position="234"/>
        <end position="235"/>
    </location>
    <ligand>
        <name>substrate</name>
    </ligand>
</feature>
<accession>Q1WSX9</accession>
<proteinExistence type="inferred from homology"/>
<evidence type="ECO:0000255" key="1">
    <source>
        <dbReference type="HAMAP-Rule" id="MF_00147"/>
    </source>
</evidence>
<keyword id="KW-0963">Cytoplasm</keyword>
<keyword id="KW-0312">Gluconeogenesis</keyword>
<keyword id="KW-0324">Glycolysis</keyword>
<keyword id="KW-0413">Isomerase</keyword>
<keyword id="KW-1185">Reference proteome</keyword>
<comment type="function">
    <text evidence="1">Involved in the gluconeogenesis. Catalyzes stereospecifically the conversion of dihydroxyacetone phosphate (DHAP) to D-glyceraldehyde-3-phosphate (G3P).</text>
</comment>
<comment type="catalytic activity">
    <reaction evidence="1">
        <text>D-glyceraldehyde 3-phosphate = dihydroxyacetone phosphate</text>
        <dbReference type="Rhea" id="RHEA:18585"/>
        <dbReference type="ChEBI" id="CHEBI:57642"/>
        <dbReference type="ChEBI" id="CHEBI:59776"/>
        <dbReference type="EC" id="5.3.1.1"/>
    </reaction>
</comment>
<comment type="pathway">
    <text evidence="1">Carbohydrate biosynthesis; gluconeogenesis.</text>
</comment>
<comment type="pathway">
    <text evidence="1">Carbohydrate degradation; glycolysis; D-glyceraldehyde 3-phosphate from glycerone phosphate: step 1/1.</text>
</comment>
<comment type="subunit">
    <text evidence="1">Homodimer.</text>
</comment>
<comment type="subcellular location">
    <subcellularLocation>
        <location evidence="1">Cytoplasm</location>
    </subcellularLocation>
</comment>
<comment type="similarity">
    <text evidence="1">Belongs to the triosephosphate isomerase family.</text>
</comment>
<organism>
    <name type="scientific">Ligilactobacillus salivarius (strain UCC118)</name>
    <name type="common">Lactobacillus salivarius</name>
    <dbReference type="NCBI Taxonomy" id="362948"/>
    <lineage>
        <taxon>Bacteria</taxon>
        <taxon>Bacillati</taxon>
        <taxon>Bacillota</taxon>
        <taxon>Bacilli</taxon>
        <taxon>Lactobacillales</taxon>
        <taxon>Lactobacillaceae</taxon>
        <taxon>Ligilactobacillus</taxon>
    </lineage>
</organism>
<gene>
    <name evidence="1" type="primary">tpiA</name>
    <name type="ordered locus">LSL_1164</name>
</gene>
<sequence>MRTPIIAGNWKMNMNPEQTAEFVKAVKDNLPAASEVEAVIAAPAVDLPALLENAKGSDLKVAAENCYFEDEGAFTGETSPKVLKEMGVDYVVIGHSERRDYFHETDEDINKKAHAIFRNGLTPIICCGESLETREAGKAEEWVANQVTAALKDLSAEQVASLVIAYEPIWAIGTGKTATADQAEEICAVVRKTVADLYDETVADKVRVQYGGSVKPANVKELMAKENIDGGLVGGASLVPDSYLQLVNYKN</sequence>
<dbReference type="EC" id="5.3.1.1" evidence="1"/>
<dbReference type="EMBL" id="CP000233">
    <property type="protein sequence ID" value="ABD99972.1"/>
    <property type="molecule type" value="Genomic_DNA"/>
</dbReference>
<dbReference type="RefSeq" id="WP_003700616.1">
    <property type="nucleotide sequence ID" value="NC_007929.1"/>
</dbReference>
<dbReference type="RefSeq" id="YP_536055.1">
    <property type="nucleotide sequence ID" value="NC_007929.1"/>
</dbReference>
<dbReference type="SMR" id="Q1WSX9"/>
<dbReference type="STRING" id="362948.LSL_1164"/>
<dbReference type="KEGG" id="lsl:LSL_1164"/>
<dbReference type="PATRIC" id="fig|362948.14.peg.1238"/>
<dbReference type="HOGENOM" id="CLU_024251_2_3_9"/>
<dbReference type="OrthoDB" id="9809429at2"/>
<dbReference type="UniPathway" id="UPA00109">
    <property type="reaction ID" value="UER00189"/>
</dbReference>
<dbReference type="UniPathway" id="UPA00138"/>
<dbReference type="Proteomes" id="UP000006559">
    <property type="component" value="Chromosome"/>
</dbReference>
<dbReference type="GO" id="GO:0005829">
    <property type="term" value="C:cytosol"/>
    <property type="evidence" value="ECO:0007669"/>
    <property type="project" value="TreeGrafter"/>
</dbReference>
<dbReference type="GO" id="GO:0004807">
    <property type="term" value="F:triose-phosphate isomerase activity"/>
    <property type="evidence" value="ECO:0007669"/>
    <property type="project" value="UniProtKB-UniRule"/>
</dbReference>
<dbReference type="GO" id="GO:0006094">
    <property type="term" value="P:gluconeogenesis"/>
    <property type="evidence" value="ECO:0007669"/>
    <property type="project" value="UniProtKB-UniRule"/>
</dbReference>
<dbReference type="GO" id="GO:0046166">
    <property type="term" value="P:glyceraldehyde-3-phosphate biosynthetic process"/>
    <property type="evidence" value="ECO:0007669"/>
    <property type="project" value="TreeGrafter"/>
</dbReference>
<dbReference type="GO" id="GO:0019563">
    <property type="term" value="P:glycerol catabolic process"/>
    <property type="evidence" value="ECO:0007669"/>
    <property type="project" value="TreeGrafter"/>
</dbReference>
<dbReference type="GO" id="GO:0006096">
    <property type="term" value="P:glycolytic process"/>
    <property type="evidence" value="ECO:0007669"/>
    <property type="project" value="UniProtKB-UniRule"/>
</dbReference>
<dbReference type="CDD" id="cd00311">
    <property type="entry name" value="TIM"/>
    <property type="match status" value="1"/>
</dbReference>
<dbReference type="FunFam" id="3.20.20.70:FF:000016">
    <property type="entry name" value="Triosephosphate isomerase"/>
    <property type="match status" value="1"/>
</dbReference>
<dbReference type="Gene3D" id="3.20.20.70">
    <property type="entry name" value="Aldolase class I"/>
    <property type="match status" value="1"/>
</dbReference>
<dbReference type="HAMAP" id="MF_00147_B">
    <property type="entry name" value="TIM_B"/>
    <property type="match status" value="1"/>
</dbReference>
<dbReference type="InterPro" id="IPR013785">
    <property type="entry name" value="Aldolase_TIM"/>
</dbReference>
<dbReference type="InterPro" id="IPR035990">
    <property type="entry name" value="TIM_sf"/>
</dbReference>
<dbReference type="InterPro" id="IPR022896">
    <property type="entry name" value="TrioseP_Isoase_bac/euk"/>
</dbReference>
<dbReference type="InterPro" id="IPR000652">
    <property type="entry name" value="Triosephosphate_isomerase"/>
</dbReference>
<dbReference type="InterPro" id="IPR020861">
    <property type="entry name" value="Triosephosphate_isomerase_AS"/>
</dbReference>
<dbReference type="NCBIfam" id="TIGR00419">
    <property type="entry name" value="tim"/>
    <property type="match status" value="1"/>
</dbReference>
<dbReference type="PANTHER" id="PTHR21139">
    <property type="entry name" value="TRIOSEPHOSPHATE ISOMERASE"/>
    <property type="match status" value="1"/>
</dbReference>
<dbReference type="PANTHER" id="PTHR21139:SF42">
    <property type="entry name" value="TRIOSEPHOSPHATE ISOMERASE"/>
    <property type="match status" value="1"/>
</dbReference>
<dbReference type="Pfam" id="PF00121">
    <property type="entry name" value="TIM"/>
    <property type="match status" value="1"/>
</dbReference>
<dbReference type="SUPFAM" id="SSF51351">
    <property type="entry name" value="Triosephosphate isomerase (TIM)"/>
    <property type="match status" value="1"/>
</dbReference>
<dbReference type="PROSITE" id="PS00171">
    <property type="entry name" value="TIM_1"/>
    <property type="match status" value="1"/>
</dbReference>
<dbReference type="PROSITE" id="PS51440">
    <property type="entry name" value="TIM_2"/>
    <property type="match status" value="1"/>
</dbReference>
<protein>
    <recommendedName>
        <fullName evidence="1">Triosephosphate isomerase</fullName>
        <shortName evidence="1">TIM</shortName>
        <shortName evidence="1">TPI</shortName>
        <ecNumber evidence="1">5.3.1.1</ecNumber>
    </recommendedName>
    <alternativeName>
        <fullName evidence="1">Triose-phosphate isomerase</fullName>
    </alternativeName>
</protein>
<reference key="1">
    <citation type="journal article" date="2006" name="Proc. Natl. Acad. Sci. U.S.A.">
        <title>Multireplicon genome architecture of Lactobacillus salivarius.</title>
        <authorList>
            <person name="Claesson M.J."/>
            <person name="Li Y."/>
            <person name="Leahy S."/>
            <person name="Canchaya C."/>
            <person name="van Pijkeren J.P."/>
            <person name="Cerdeno-Tarraga A.M."/>
            <person name="Parkhill J."/>
            <person name="Flynn S."/>
            <person name="O'Sullivan G.C."/>
            <person name="Collins J.K."/>
            <person name="Higgins D."/>
            <person name="Shanahan F."/>
            <person name="Fitzgerald G.F."/>
            <person name="van Sinderen D."/>
            <person name="O'Toole P.W."/>
        </authorList>
    </citation>
    <scope>NUCLEOTIDE SEQUENCE [LARGE SCALE GENOMIC DNA]</scope>
    <source>
        <strain>UCC118</strain>
    </source>
</reference>
<name>TPIS_LIGS1</name>